<reference key="1">
    <citation type="journal article" date="1995" name="Plant Mol. Biol. Rep.">
        <title>Nucleotide sequence of the cyanelle DNA from Cyanophora paradoxa.</title>
        <authorList>
            <person name="Stirewalt V.L."/>
            <person name="Michalowski C.B."/>
            <person name="Loeffelhardt W."/>
            <person name="Bohnert H.J."/>
            <person name="Bryant D.A."/>
        </authorList>
    </citation>
    <scope>NUCLEOTIDE SEQUENCE [LARGE SCALE GENOMIC DNA]</scope>
    <source>
        <strain>UTEX LB 555 / Pringsheim</strain>
    </source>
</reference>
<reference key="2">
    <citation type="book" date="1997" name="Eukaryotism and symbiosis">
        <title>The complete sequence of the cyanelle genome of Cyanophora paradoxa: the genetic complexity of a primitive plastid.</title>
        <editorList>
            <person name="Schenk H.E.A."/>
            <person name="Herrmann R."/>
            <person name="Jeon K.W."/>
            <person name="Mueller N.E."/>
            <person name="Schwemmler W."/>
        </editorList>
        <authorList>
            <person name="Loeffelhardt W."/>
            <person name="Stirewalt V.L."/>
            <person name="Michalowski C.B."/>
            <person name="Annarella M."/>
            <person name="Farley J.Y."/>
            <person name="Schluchter W.M."/>
            <person name="Chung S."/>
            <person name="Newmann-Spallart C."/>
            <person name="Steiner J.M."/>
            <person name="Jakowitsch J."/>
            <person name="Bohnert H.J."/>
            <person name="Bryant D.A."/>
        </authorList>
    </citation>
    <scope>NUCLEOTIDE SEQUENCE [LARGE SCALE GENOMIC DNA]</scope>
    <source>
        <strain>UTEX LB 555 / Pringsheim</strain>
    </source>
</reference>
<sequence>MAKQILYHESARRALEKGMDILAEAVAVTLGPKGRNVVLEKKFGAPQIVNDGVTIAKEIELEDHIENTGVALIRQAASKTNDVAGDGTTTATVLAYAMVKEGMRNVAAGANPMAIKRGIDRATQKVVETIAAHAKPVEDSRAITQVASISAGNDDEVGKMIADAIEKVGKEGVISLEEGKSTTTELEITEGMRFDKGYISPYFVTDPERMEVIQKDAMFLITDKKITLVQDLVPILEQVARARKPLFIIAEDIEKEALATLVVNKLRGNLNVSAVKAPGFGDRRKAMMQDIAVLTNTQVISEQTGLRLDSIKLDVLGKARQVNITKDYTTVIAEGNEEGVSARCEQIRRQIEETDSAYEKEKLQERLAKLAGGVAVIKVGAATETEMKDKKLRLEDAINATKAAVEEGIVPGGGTTLAHLAIELENWVQSNLEHEELIGGMIVARSLTAPLKRIVENAGQNGAVIAEQVKDKPFNIGYNAANAQFVDMFEAGIVDPAKVTRSGLQNAASIAGMVLTTECIVVDKAESQQKAASVNRNSFDY</sequence>
<organism>
    <name type="scientific">Cyanophora paradoxa</name>
    <dbReference type="NCBI Taxonomy" id="2762"/>
    <lineage>
        <taxon>Eukaryota</taxon>
        <taxon>Glaucocystophyceae</taxon>
        <taxon>Cyanophoraceae</taxon>
        <taxon>Cyanophora</taxon>
    </lineage>
</organism>
<proteinExistence type="inferred from homology"/>
<geneLocation type="cyanelle"/>
<feature type="chain" id="PRO_0000063620" description="Chaperonin GroEL, cyanelle">
    <location>
        <begin position="1"/>
        <end position="541"/>
    </location>
</feature>
<feature type="binding site" evidence="1">
    <location>
        <begin position="29"/>
        <end position="32"/>
    </location>
    <ligand>
        <name>ATP</name>
        <dbReference type="ChEBI" id="CHEBI:30616"/>
    </ligand>
</feature>
<feature type="binding site" evidence="1">
    <location>
        <begin position="86"/>
        <end position="90"/>
    </location>
    <ligand>
        <name>ATP</name>
        <dbReference type="ChEBI" id="CHEBI:30616"/>
    </ligand>
</feature>
<feature type="binding site" evidence="1">
    <location>
        <position position="413"/>
    </location>
    <ligand>
        <name>ATP</name>
        <dbReference type="ChEBI" id="CHEBI:30616"/>
    </ligand>
</feature>
<feature type="binding site" evidence="1">
    <location>
        <begin position="479"/>
        <end position="481"/>
    </location>
    <ligand>
        <name>ATP</name>
        <dbReference type="ChEBI" id="CHEBI:30616"/>
    </ligand>
</feature>
<feature type="binding site" evidence="1">
    <location>
        <position position="495"/>
    </location>
    <ligand>
        <name>ATP</name>
        <dbReference type="ChEBI" id="CHEBI:30616"/>
    </ligand>
</feature>
<protein>
    <recommendedName>
        <fullName evidence="2">Chaperonin GroEL, cyanelle</fullName>
        <ecNumber evidence="1">5.6.1.7</ecNumber>
    </recommendedName>
    <alternativeName>
        <fullName evidence="1">60 kDa chaperonin</fullName>
    </alternativeName>
    <alternativeName>
        <fullName evidence="1">Chaperonin-60</fullName>
        <shortName evidence="1">Cpn60</shortName>
    </alternativeName>
</protein>
<name>CH60_CYAPA</name>
<comment type="function">
    <text evidence="1">Together with its co-chaperonin GroES, plays an essential role in assisting protein folding. The GroEL-GroES system forms a nano-cage that allows encapsulation of the non-native substrate proteins and provides a physical environment optimized to promote and accelerate protein folding.</text>
</comment>
<comment type="catalytic activity">
    <reaction evidence="1">
        <text>ATP + H2O + a folded polypeptide = ADP + phosphate + an unfolded polypeptide.</text>
        <dbReference type="EC" id="5.6.1.7"/>
    </reaction>
</comment>
<comment type="subunit">
    <text evidence="1">Forms a cylinder of 14 subunits composed of two heptameric rings stacked back-to-back. Interacts with the co-chaperonin GroES.</text>
</comment>
<comment type="subcellular location">
    <subcellularLocation>
        <location>Plastid</location>
        <location>Cyanelle</location>
    </subcellularLocation>
</comment>
<comment type="similarity">
    <text evidence="1 2">Belongs to the chaperonin (HSP60) family.</text>
</comment>
<accession>Q37757</accession>
<gene>
    <name evidence="1" type="primary">groEL1</name>
    <name type="synonym">groEL-A</name>
    <name type="synonym">groL-A</name>
    <name evidence="1" type="synonym">groL1</name>
</gene>
<gene>
    <name evidence="1" type="primary">groEL2</name>
    <name type="synonym">groEL-B</name>
    <name type="synonym">groL-B</name>
    <name evidence="1" type="synonym">groL2</name>
</gene>
<keyword id="KW-0067">ATP-binding</keyword>
<keyword id="KW-0143">Chaperone</keyword>
<keyword id="KW-0194">Cyanelle</keyword>
<keyword id="KW-0413">Isomerase</keyword>
<keyword id="KW-0547">Nucleotide-binding</keyword>
<keyword id="KW-0934">Plastid</keyword>
<evidence type="ECO:0000255" key="1">
    <source>
        <dbReference type="HAMAP-Rule" id="MF_00600"/>
    </source>
</evidence>
<evidence type="ECO:0000305" key="2"/>
<dbReference type="EC" id="5.6.1.7" evidence="1"/>
<dbReference type="EMBL" id="U30821">
    <property type="protein sequence ID" value="AAA81172.1"/>
    <property type="molecule type" value="Genomic_DNA"/>
</dbReference>
<dbReference type="EMBL" id="U30821">
    <property type="protein sequence ID" value="AAA81294.1"/>
    <property type="molecule type" value="Genomic_DNA"/>
</dbReference>
<dbReference type="PIR" id="T06829">
    <property type="entry name" value="T06829"/>
</dbReference>
<dbReference type="SMR" id="Q37757"/>
<dbReference type="GO" id="GO:0009842">
    <property type="term" value="C:cyanelle"/>
    <property type="evidence" value="ECO:0007669"/>
    <property type="project" value="UniProtKB-SubCell"/>
</dbReference>
<dbReference type="GO" id="GO:0005524">
    <property type="term" value="F:ATP binding"/>
    <property type="evidence" value="ECO:0007669"/>
    <property type="project" value="UniProtKB-UniRule"/>
</dbReference>
<dbReference type="GO" id="GO:0140662">
    <property type="term" value="F:ATP-dependent protein folding chaperone"/>
    <property type="evidence" value="ECO:0007669"/>
    <property type="project" value="InterPro"/>
</dbReference>
<dbReference type="GO" id="GO:0016853">
    <property type="term" value="F:isomerase activity"/>
    <property type="evidence" value="ECO:0007669"/>
    <property type="project" value="UniProtKB-KW"/>
</dbReference>
<dbReference type="GO" id="GO:0051082">
    <property type="term" value="F:unfolded protein binding"/>
    <property type="evidence" value="ECO:0007669"/>
    <property type="project" value="UniProtKB-UniRule"/>
</dbReference>
<dbReference type="GO" id="GO:0042026">
    <property type="term" value="P:protein refolding"/>
    <property type="evidence" value="ECO:0007669"/>
    <property type="project" value="UniProtKB-UniRule"/>
</dbReference>
<dbReference type="CDD" id="cd03344">
    <property type="entry name" value="GroEL"/>
    <property type="match status" value="1"/>
</dbReference>
<dbReference type="FunFam" id="3.50.7.10:FF:000001">
    <property type="entry name" value="60 kDa chaperonin"/>
    <property type="match status" value="1"/>
</dbReference>
<dbReference type="Gene3D" id="3.50.7.10">
    <property type="entry name" value="GroEL"/>
    <property type="match status" value="1"/>
</dbReference>
<dbReference type="Gene3D" id="1.10.560.10">
    <property type="entry name" value="GroEL-like equatorial domain"/>
    <property type="match status" value="1"/>
</dbReference>
<dbReference type="Gene3D" id="3.30.260.10">
    <property type="entry name" value="TCP-1-like chaperonin intermediate domain"/>
    <property type="match status" value="1"/>
</dbReference>
<dbReference type="HAMAP" id="MF_00600">
    <property type="entry name" value="CH60"/>
    <property type="match status" value="1"/>
</dbReference>
<dbReference type="InterPro" id="IPR018370">
    <property type="entry name" value="Chaperonin_Cpn60_CS"/>
</dbReference>
<dbReference type="InterPro" id="IPR001844">
    <property type="entry name" value="Cpn60/GroEL"/>
</dbReference>
<dbReference type="InterPro" id="IPR002423">
    <property type="entry name" value="Cpn60/GroEL/TCP-1"/>
</dbReference>
<dbReference type="InterPro" id="IPR027409">
    <property type="entry name" value="GroEL-like_apical_dom_sf"/>
</dbReference>
<dbReference type="InterPro" id="IPR027413">
    <property type="entry name" value="GROEL-like_equatorial_sf"/>
</dbReference>
<dbReference type="InterPro" id="IPR027410">
    <property type="entry name" value="TCP-1-like_intermed_sf"/>
</dbReference>
<dbReference type="NCBIfam" id="TIGR02348">
    <property type="entry name" value="GroEL"/>
    <property type="match status" value="1"/>
</dbReference>
<dbReference type="NCBIfam" id="NF000592">
    <property type="entry name" value="PRK00013.1"/>
    <property type="match status" value="1"/>
</dbReference>
<dbReference type="NCBIfam" id="NF009487">
    <property type="entry name" value="PRK12849.1"/>
    <property type="match status" value="1"/>
</dbReference>
<dbReference type="NCBIfam" id="NF009488">
    <property type="entry name" value="PRK12850.1"/>
    <property type="match status" value="1"/>
</dbReference>
<dbReference type="NCBIfam" id="NF009489">
    <property type="entry name" value="PRK12851.1"/>
    <property type="match status" value="1"/>
</dbReference>
<dbReference type="PANTHER" id="PTHR45633">
    <property type="entry name" value="60 KDA HEAT SHOCK PROTEIN, MITOCHONDRIAL"/>
    <property type="match status" value="1"/>
</dbReference>
<dbReference type="Pfam" id="PF00118">
    <property type="entry name" value="Cpn60_TCP1"/>
    <property type="match status" value="1"/>
</dbReference>
<dbReference type="PRINTS" id="PR00298">
    <property type="entry name" value="CHAPERONIN60"/>
</dbReference>
<dbReference type="SUPFAM" id="SSF52029">
    <property type="entry name" value="GroEL apical domain-like"/>
    <property type="match status" value="1"/>
</dbReference>
<dbReference type="SUPFAM" id="SSF48592">
    <property type="entry name" value="GroEL equatorial domain-like"/>
    <property type="match status" value="1"/>
</dbReference>
<dbReference type="SUPFAM" id="SSF54849">
    <property type="entry name" value="GroEL-intermediate domain like"/>
    <property type="match status" value="1"/>
</dbReference>
<dbReference type="PROSITE" id="PS00296">
    <property type="entry name" value="CHAPERONINS_CPN60"/>
    <property type="match status" value="1"/>
</dbReference>